<proteinExistence type="inferred from homology"/>
<reference key="1">
    <citation type="journal article" date="2004" name="Science">
        <title>The Ashbya gossypii genome as a tool for mapping the ancient Saccharomyces cerevisiae genome.</title>
        <authorList>
            <person name="Dietrich F.S."/>
            <person name="Voegeli S."/>
            <person name="Brachat S."/>
            <person name="Lerch A."/>
            <person name="Gates K."/>
            <person name="Steiner S."/>
            <person name="Mohr C."/>
            <person name="Poehlmann R."/>
            <person name="Luedi P."/>
            <person name="Choi S."/>
            <person name="Wing R.A."/>
            <person name="Flavier A."/>
            <person name="Gaffney T.D."/>
            <person name="Philippsen P."/>
        </authorList>
    </citation>
    <scope>NUCLEOTIDE SEQUENCE [LARGE SCALE GENOMIC DNA]</scope>
    <source>
        <strain>ATCC 10895 / CBS 109.51 / FGSC 9923 / NRRL Y-1056</strain>
    </source>
</reference>
<reference key="2">
    <citation type="journal article" date="2013" name="G3 (Bethesda)">
        <title>Genomes of Ashbya fungi isolated from insects reveal four mating-type loci, numerous translocations, lack of transposons, and distinct gene duplications.</title>
        <authorList>
            <person name="Dietrich F.S."/>
            <person name="Voegeli S."/>
            <person name="Kuo S."/>
            <person name="Philippsen P."/>
        </authorList>
    </citation>
    <scope>GENOME REANNOTATION</scope>
    <source>
        <strain>ATCC 10895 / CBS 109.51 / FGSC 9923 / NRRL Y-1056</strain>
    </source>
</reference>
<accession>Q75EG5</accession>
<sequence length="553" mass="61473">MYGKSGPPPEGYVPQHPPAQGYAPHNPPPGYVHENPFQEPVPQGQEYSPQGQQYQFRKDQYYNLDHQGSGAPIGDASFEDKFPTEAGNRLKFNDWPFTIIFLLTVGAFIAVAVLTLRGWSLSPTSNGSGIYDGDNTHTLNTNAAILLLISCGVAVALSVFGLVLAGMYTKFFIYAAMILNTVVGLGTAITYLVLRHWSAGIVFMIFTILTAVCYWLMRSRIPFSVAVLRTVMSVMKKHPQTWLVSLLGTIVSAAFSVIFSVVLVATYIKYDPKSENGGCDVSGGSCSRGKLIGILVLVFFCGFYISEVIRNVIHCTIAGIYGCWYYFSKSDQGMPRWPAFGSLKRALTTSFGSICFGSLIVSLIQLLRQIIQLLRNGIISGISDSGWMQCLWLILDAVVGVFEWMAEYFNHYAYCFIALYGKPYLRAAKETWHMLREKGIDALINDNLINLALGFYTLFVGYTTALFSYLFLRFTKPDYNSGGGFNAVLMAFSFLIAIQLTHVATETIRSGTATFFVALGNDPEIFRVSYPQRFDEIFRAYPDVLNKLSHQHV</sequence>
<keyword id="KW-1003">Cell membrane</keyword>
<keyword id="KW-0325">Glycoprotein</keyword>
<keyword id="KW-0472">Membrane</keyword>
<keyword id="KW-1185">Reference proteome</keyword>
<keyword id="KW-0812">Transmembrane</keyword>
<keyword id="KW-1133">Transmembrane helix</keyword>
<keyword id="KW-0813">Transport</keyword>
<dbReference type="EMBL" id="AE016814">
    <property type="protein sequence ID" value="AAS50479.1"/>
    <property type="molecule type" value="Genomic_DNA"/>
</dbReference>
<dbReference type="RefSeq" id="NP_982655.1">
    <property type="nucleotide sequence ID" value="NM_208008.1"/>
</dbReference>
<dbReference type="SMR" id="Q75EG5"/>
<dbReference type="FunCoup" id="Q75EG5">
    <property type="interactions" value="253"/>
</dbReference>
<dbReference type="STRING" id="284811.Q75EG5"/>
<dbReference type="GlyCosmos" id="Q75EG5">
    <property type="glycosylation" value="1 site, No reported glycans"/>
</dbReference>
<dbReference type="EnsemblFungi" id="AAS50479">
    <property type="protein sequence ID" value="AAS50479"/>
    <property type="gene ID" value="AGOS_AAR113W"/>
</dbReference>
<dbReference type="GeneID" id="4618709"/>
<dbReference type="KEGG" id="ago:AGOS_AAR113W"/>
<dbReference type="eggNOG" id="KOG1362">
    <property type="taxonomic scope" value="Eukaryota"/>
</dbReference>
<dbReference type="HOGENOM" id="CLU_026724_0_0_1"/>
<dbReference type="InParanoid" id="Q75EG5"/>
<dbReference type="OMA" id="DTIFVAM"/>
<dbReference type="OrthoDB" id="44736at2759"/>
<dbReference type="Proteomes" id="UP000000591">
    <property type="component" value="Chromosome I"/>
</dbReference>
<dbReference type="GO" id="GO:0016020">
    <property type="term" value="C:membrane"/>
    <property type="evidence" value="ECO:0000318"/>
    <property type="project" value="GO_Central"/>
</dbReference>
<dbReference type="GO" id="GO:0005886">
    <property type="term" value="C:plasma membrane"/>
    <property type="evidence" value="ECO:0007669"/>
    <property type="project" value="UniProtKB-SubCell"/>
</dbReference>
<dbReference type="GO" id="GO:0022857">
    <property type="term" value="F:transmembrane transporter activity"/>
    <property type="evidence" value="ECO:0000318"/>
    <property type="project" value="GO_Central"/>
</dbReference>
<dbReference type="GO" id="GO:0055085">
    <property type="term" value="P:transmembrane transport"/>
    <property type="evidence" value="ECO:0000318"/>
    <property type="project" value="GO_Central"/>
</dbReference>
<dbReference type="InterPro" id="IPR007603">
    <property type="entry name" value="Choline_transptr-like"/>
</dbReference>
<dbReference type="PANTHER" id="PTHR12385">
    <property type="entry name" value="CHOLINE TRANSPORTER-LIKE (SLC FAMILY 44)"/>
    <property type="match status" value="1"/>
</dbReference>
<dbReference type="PANTHER" id="PTHR12385:SF4">
    <property type="entry name" value="PROTEIN PNS1"/>
    <property type="match status" value="1"/>
</dbReference>
<dbReference type="Pfam" id="PF04515">
    <property type="entry name" value="Choline_transpo"/>
    <property type="match status" value="1"/>
</dbReference>
<feature type="chain" id="PRO_0000191729" description="Protein PNS1">
    <location>
        <begin position="1"/>
        <end position="553"/>
    </location>
</feature>
<feature type="topological domain" description="Cytoplasmic" evidence="2">
    <location>
        <begin position="1"/>
        <end position="95"/>
    </location>
</feature>
<feature type="transmembrane region" description="Helical" evidence="2">
    <location>
        <begin position="96"/>
        <end position="116"/>
    </location>
</feature>
<feature type="topological domain" description="Extracellular" evidence="2">
    <location>
        <begin position="117"/>
        <end position="143"/>
    </location>
</feature>
<feature type="transmembrane region" description="Helical" evidence="2">
    <location>
        <begin position="144"/>
        <end position="164"/>
    </location>
</feature>
<feature type="topological domain" description="Cytoplasmic" evidence="2">
    <location>
        <begin position="165"/>
        <end position="170"/>
    </location>
</feature>
<feature type="transmembrane region" description="Helical" evidence="2">
    <location>
        <begin position="171"/>
        <end position="191"/>
    </location>
</feature>
<feature type="topological domain" description="Extracellular" evidence="2">
    <location>
        <begin position="192"/>
        <end position="196"/>
    </location>
</feature>
<feature type="transmembrane region" description="Helical" evidence="2">
    <location>
        <begin position="197"/>
        <end position="217"/>
    </location>
</feature>
<feature type="topological domain" description="Cytoplasmic" evidence="2">
    <location>
        <begin position="218"/>
        <end position="243"/>
    </location>
</feature>
<feature type="transmembrane region" description="Helical" evidence="2">
    <location>
        <begin position="244"/>
        <end position="264"/>
    </location>
</feature>
<feature type="topological domain" description="Extracellular" evidence="2">
    <location>
        <begin position="265"/>
        <end position="288"/>
    </location>
</feature>
<feature type="transmembrane region" description="Helical" evidence="2">
    <location>
        <begin position="289"/>
        <end position="309"/>
    </location>
</feature>
<feature type="topological domain" description="Cytoplasmic" evidence="2">
    <location>
        <begin position="310"/>
        <end position="346"/>
    </location>
</feature>
<feature type="transmembrane region" description="Helical" evidence="2">
    <location>
        <begin position="347"/>
        <end position="367"/>
    </location>
</feature>
<feature type="topological domain" description="Extracellular" evidence="2">
    <location>
        <begin position="368"/>
        <end position="385"/>
    </location>
</feature>
<feature type="transmembrane region" description="Helical" evidence="2">
    <location>
        <begin position="386"/>
        <end position="406"/>
    </location>
</feature>
<feature type="topological domain" description="Cytoplasmic" evidence="2">
    <location>
        <begin position="407"/>
        <end position="450"/>
    </location>
</feature>
<feature type="transmembrane region" description="Helical" evidence="2">
    <location>
        <begin position="451"/>
        <end position="471"/>
    </location>
</feature>
<feature type="topological domain" description="Extracellular" evidence="2">
    <location>
        <begin position="472"/>
        <end position="483"/>
    </location>
</feature>
<feature type="transmembrane region" description="Helical" evidence="2">
    <location>
        <begin position="484"/>
        <end position="504"/>
    </location>
</feature>
<feature type="topological domain" description="Cytoplasmic" evidence="2">
    <location>
        <begin position="505"/>
        <end position="553"/>
    </location>
</feature>
<feature type="region of interest" description="Disordered" evidence="3">
    <location>
        <begin position="1"/>
        <end position="49"/>
    </location>
</feature>
<feature type="compositionally biased region" description="Pro residues" evidence="3">
    <location>
        <begin position="1"/>
        <end position="17"/>
    </location>
</feature>
<feature type="glycosylation site" description="N-linked (GlcNAc...) asparagine" evidence="2">
    <location>
        <position position="126"/>
    </location>
</feature>
<name>PNS1_EREGS</name>
<organism>
    <name type="scientific">Eremothecium gossypii (strain ATCC 10895 / CBS 109.51 / FGSC 9923 / NRRL Y-1056)</name>
    <name type="common">Yeast</name>
    <name type="synonym">Ashbya gossypii</name>
    <dbReference type="NCBI Taxonomy" id="284811"/>
    <lineage>
        <taxon>Eukaryota</taxon>
        <taxon>Fungi</taxon>
        <taxon>Dikarya</taxon>
        <taxon>Ascomycota</taxon>
        <taxon>Saccharomycotina</taxon>
        <taxon>Saccharomycetes</taxon>
        <taxon>Saccharomycetales</taxon>
        <taxon>Saccharomycetaceae</taxon>
        <taxon>Eremothecium</taxon>
    </lineage>
</organism>
<comment type="function">
    <text evidence="1">Probably involved in transport through the plasma membrane.</text>
</comment>
<comment type="subcellular location">
    <subcellularLocation>
        <location evidence="1">Cell membrane</location>
        <topology evidence="1">Multi-pass membrane protein</topology>
    </subcellularLocation>
</comment>
<comment type="similarity">
    <text evidence="4">Belongs to the CTL (choline transporter-like) family.</text>
</comment>
<gene>
    <name type="primary">PNS1</name>
    <name type="ordered locus">AAR113W</name>
</gene>
<protein>
    <recommendedName>
        <fullName>Protein PNS1</fullName>
    </recommendedName>
</protein>
<evidence type="ECO:0000250" key="1"/>
<evidence type="ECO:0000255" key="2"/>
<evidence type="ECO:0000256" key="3">
    <source>
        <dbReference type="SAM" id="MobiDB-lite"/>
    </source>
</evidence>
<evidence type="ECO:0000305" key="4"/>